<name>Y1632_AQUAE</name>
<evidence type="ECO:0000250" key="1"/>
<evidence type="ECO:0000255" key="2"/>
<evidence type="ECO:0000255" key="3">
    <source>
        <dbReference type="PROSITE-ProRule" id="PRU01266"/>
    </source>
</evidence>
<evidence type="ECO:0000305" key="4"/>
<keyword id="KW-0004">4Fe-4S</keyword>
<keyword id="KW-0408">Iron</keyword>
<keyword id="KW-0411">Iron-sulfur</keyword>
<keyword id="KW-0413">Isomerase</keyword>
<keyword id="KW-0479">Metal-binding</keyword>
<keyword id="KW-0663">Pyridoxal phosphate</keyword>
<keyword id="KW-1185">Reference proteome</keyword>
<keyword id="KW-0949">S-adenosyl-L-methionine</keyword>
<protein>
    <recommendedName>
        <fullName>Putative L-lysine 2,3-aminomutase aq_1632</fullName>
        <shortName>LAM</shortName>
        <ecNumber>5.4.3.-</ecNumber>
    </recommendedName>
</protein>
<accession>O67554</accession>
<reference key="1">
    <citation type="journal article" date="1998" name="Nature">
        <title>The complete genome of the hyperthermophilic bacterium Aquifex aeolicus.</title>
        <authorList>
            <person name="Deckert G."/>
            <person name="Warren P.V."/>
            <person name="Gaasterland T."/>
            <person name="Young W.G."/>
            <person name="Lenox A.L."/>
            <person name="Graham D.E."/>
            <person name="Overbeek R."/>
            <person name="Snead M.A."/>
            <person name="Keller M."/>
            <person name="Aujay M."/>
            <person name="Huber R."/>
            <person name="Feldman R.A."/>
            <person name="Short J.M."/>
            <person name="Olsen G.J."/>
            <person name="Swanson R.V."/>
        </authorList>
    </citation>
    <scope>NUCLEOTIDE SEQUENCE [LARGE SCALE GENOMIC DNA]</scope>
    <source>
        <strain>VF5</strain>
    </source>
</reference>
<organism>
    <name type="scientific">Aquifex aeolicus (strain VF5)</name>
    <dbReference type="NCBI Taxonomy" id="224324"/>
    <lineage>
        <taxon>Bacteria</taxon>
        <taxon>Pseudomonadati</taxon>
        <taxon>Aquificota</taxon>
        <taxon>Aquificia</taxon>
        <taxon>Aquificales</taxon>
        <taxon>Aquificaceae</taxon>
        <taxon>Aquifex</taxon>
    </lineage>
</organism>
<sequence>MGKKLKYIIDLKFIEEIPEEERRELEKVTEKFAFRTNTYYNSLINWDNPNDPIRRIVIPTTEELEVWGKLDASNESKYMKVHGLEHKYPDTALLLVTDVCGIYCRFCFRKRLFMNDNDEVARDVSEGLEYIRNHPEINNVLLTGGDPLILATFKLEKILKALAEIPHVRIVRIGSKMLAVNPFRVLDDPKLLELFEWFNTETGKKLYLMNHFNHPRELTKEARKAVELVQKTGTTLTNQTPILKGINDDFETLKTLLEELSFIGVPPYYVFQCRPTAGNKAYSTPIEETIDLVEAVRAEVSGLAARVRYVMSHETGKIEILGKTDEHIFFRYHRAADPENRGKFMVFKRNPEAHWFDDYTELVAEYKSSLSGVS</sequence>
<dbReference type="EC" id="5.4.3.-"/>
<dbReference type="EMBL" id="AE000657">
    <property type="protein sequence ID" value="AAC07521.1"/>
    <property type="molecule type" value="Genomic_DNA"/>
</dbReference>
<dbReference type="PIR" id="H70440">
    <property type="entry name" value="H70440"/>
</dbReference>
<dbReference type="RefSeq" id="NP_214119.1">
    <property type="nucleotide sequence ID" value="NC_000918.1"/>
</dbReference>
<dbReference type="RefSeq" id="WP_010881057.1">
    <property type="nucleotide sequence ID" value="NC_000918.1"/>
</dbReference>
<dbReference type="SMR" id="O67554"/>
<dbReference type="FunCoup" id="O67554">
    <property type="interactions" value="46"/>
</dbReference>
<dbReference type="STRING" id="224324.aq_1632"/>
<dbReference type="EnsemblBacteria" id="AAC07521">
    <property type="protein sequence ID" value="AAC07521"/>
    <property type="gene ID" value="aq_1632"/>
</dbReference>
<dbReference type="KEGG" id="aae:aq_1632"/>
<dbReference type="PATRIC" id="fig|224324.8.peg.1259"/>
<dbReference type="eggNOG" id="COG1509">
    <property type="taxonomic scope" value="Bacteria"/>
</dbReference>
<dbReference type="HOGENOM" id="CLU_032161_3_1_0"/>
<dbReference type="InParanoid" id="O67554"/>
<dbReference type="OrthoDB" id="9768064at2"/>
<dbReference type="Proteomes" id="UP000000798">
    <property type="component" value="Chromosome"/>
</dbReference>
<dbReference type="GO" id="GO:0051539">
    <property type="term" value="F:4 iron, 4 sulfur cluster binding"/>
    <property type="evidence" value="ECO:0007669"/>
    <property type="project" value="UniProtKB-KW"/>
</dbReference>
<dbReference type="GO" id="GO:0016853">
    <property type="term" value="F:isomerase activity"/>
    <property type="evidence" value="ECO:0007669"/>
    <property type="project" value="UniProtKB-KW"/>
</dbReference>
<dbReference type="GO" id="GO:0046872">
    <property type="term" value="F:metal ion binding"/>
    <property type="evidence" value="ECO:0007669"/>
    <property type="project" value="UniProtKB-KW"/>
</dbReference>
<dbReference type="CDD" id="cd01335">
    <property type="entry name" value="Radical_SAM"/>
    <property type="match status" value="1"/>
</dbReference>
<dbReference type="Gene3D" id="3.20.20.70">
    <property type="entry name" value="Aldolase class I"/>
    <property type="match status" value="1"/>
</dbReference>
<dbReference type="InterPro" id="IPR013785">
    <property type="entry name" value="Aldolase_TIM"/>
</dbReference>
<dbReference type="InterPro" id="IPR003739">
    <property type="entry name" value="Lys_aminomutase/Glu_NH3_mut"/>
</dbReference>
<dbReference type="InterPro" id="IPR007197">
    <property type="entry name" value="rSAM"/>
</dbReference>
<dbReference type="NCBIfam" id="TIGR00238">
    <property type="entry name" value="KamA family radical SAM protein"/>
    <property type="match status" value="1"/>
</dbReference>
<dbReference type="PANTHER" id="PTHR30538:SF0">
    <property type="entry name" value="L-LYSINE 2,3-AMINOMUTASE AQ_1632-RELATED"/>
    <property type="match status" value="1"/>
</dbReference>
<dbReference type="PANTHER" id="PTHR30538">
    <property type="entry name" value="LYSINE 2,3-AMINOMUTASE-RELATED"/>
    <property type="match status" value="1"/>
</dbReference>
<dbReference type="Pfam" id="PF04055">
    <property type="entry name" value="Radical_SAM"/>
    <property type="match status" value="1"/>
</dbReference>
<dbReference type="PIRSF" id="PIRSF004911">
    <property type="entry name" value="DUF160"/>
    <property type="match status" value="1"/>
</dbReference>
<dbReference type="SFLD" id="SFLDG01070">
    <property type="entry name" value="PLP-dependent"/>
    <property type="match status" value="1"/>
</dbReference>
<dbReference type="SFLD" id="SFLDS00029">
    <property type="entry name" value="Radical_SAM"/>
    <property type="match status" value="1"/>
</dbReference>
<dbReference type="SUPFAM" id="SSF102114">
    <property type="entry name" value="Radical SAM enzymes"/>
    <property type="match status" value="1"/>
</dbReference>
<dbReference type="PROSITE" id="PS51918">
    <property type="entry name" value="RADICAL_SAM"/>
    <property type="match status" value="1"/>
</dbReference>
<comment type="cofactor">
    <cofactor evidence="1">
        <name>[4Fe-4S] cluster</name>
        <dbReference type="ChEBI" id="CHEBI:49883"/>
    </cofactor>
    <text evidence="1">Binds 1 [4Fe-4S] cluster. The cluster is coordinated with 3 cysteines and an exchangeable S-adenosyl-L-methionine.</text>
</comment>
<comment type="cofactor">
    <cofactor evidence="1">
        <name>pyridoxal 5'-phosphate</name>
        <dbReference type="ChEBI" id="CHEBI:597326"/>
    </cofactor>
</comment>
<comment type="similarity">
    <text evidence="4">Belongs to the radical SAM superfamily. KamA family.</text>
</comment>
<proteinExistence type="inferred from homology"/>
<gene>
    <name type="ordered locus">aq_1632</name>
</gene>
<feature type="chain" id="PRO_0000172291" description="Putative L-lysine 2,3-aminomutase aq_1632">
    <location>
        <begin position="1"/>
        <end position="374"/>
    </location>
</feature>
<feature type="domain" description="Radical SAM core" evidence="3">
    <location>
        <begin position="86"/>
        <end position="314"/>
    </location>
</feature>
<feature type="binding site" evidence="2">
    <location>
        <position position="100"/>
    </location>
    <ligand>
        <name>[4Fe-4S] cluster</name>
        <dbReference type="ChEBI" id="CHEBI:49883"/>
        <note>4Fe-4S-S-AdoMet</note>
    </ligand>
</feature>
<feature type="binding site" evidence="2">
    <location>
        <position position="104"/>
    </location>
    <ligand>
        <name>[4Fe-4S] cluster</name>
        <dbReference type="ChEBI" id="CHEBI:49883"/>
        <note>4Fe-4S-S-AdoMet</note>
    </ligand>
</feature>
<feature type="binding site" evidence="2">
    <location>
        <position position="107"/>
    </location>
    <ligand>
        <name>[4Fe-4S] cluster</name>
        <dbReference type="ChEBI" id="CHEBI:49883"/>
        <note>4Fe-4S-S-AdoMet</note>
    </ligand>
</feature>
<feature type="modified residue" description="N6-(pyridoxal phosphate)lysine" evidence="1">
    <location>
        <position position="317"/>
    </location>
</feature>